<organism>
    <name type="scientific">Homo sapiens</name>
    <name type="common">Human</name>
    <dbReference type="NCBI Taxonomy" id="9606"/>
    <lineage>
        <taxon>Eukaryota</taxon>
        <taxon>Metazoa</taxon>
        <taxon>Chordata</taxon>
        <taxon>Craniata</taxon>
        <taxon>Vertebrata</taxon>
        <taxon>Euteleostomi</taxon>
        <taxon>Mammalia</taxon>
        <taxon>Eutheria</taxon>
        <taxon>Euarchontoglires</taxon>
        <taxon>Primates</taxon>
        <taxon>Haplorrhini</taxon>
        <taxon>Catarrhini</taxon>
        <taxon>Hominidae</taxon>
        <taxon>Homo</taxon>
    </lineage>
</organism>
<name>CLXN_HUMAN</name>
<evidence type="ECO:0000250" key="1">
    <source>
        <dbReference type="UniProtKB" id="Q32L26"/>
    </source>
</evidence>
<evidence type="ECO:0000250" key="2">
    <source>
        <dbReference type="UniProtKB" id="Q9D3N2"/>
    </source>
</evidence>
<evidence type="ECO:0000255" key="3">
    <source>
        <dbReference type="PROSITE-ProRule" id="PRU00448"/>
    </source>
</evidence>
<evidence type="ECO:0000269" key="4">
    <source>
    </source>
</evidence>
<evidence type="ECO:0000269" key="5">
    <source>
    </source>
</evidence>
<evidence type="ECO:0000303" key="6">
    <source>
    </source>
</evidence>
<evidence type="ECO:0000303" key="7">
    <source>
    </source>
</evidence>
<evidence type="ECO:0000305" key="8"/>
<evidence type="ECO:0000312" key="9">
    <source>
        <dbReference type="HGNC" id="HGNC:25678"/>
    </source>
</evidence>
<accession>Q9HAE3</accession>
<accession>B4DSB4</accession>
<accession>E7EVN7</accession>
<feature type="chain" id="PRO_0000251969" description="Calaxin">
    <location>
        <begin position="1"/>
        <end position="211"/>
    </location>
</feature>
<feature type="domain" description="EF-hand 1" evidence="3">
    <location>
        <begin position="64"/>
        <end position="99"/>
    </location>
</feature>
<feature type="domain" description="EF-hand 2" evidence="3">
    <location>
        <begin position="100"/>
        <end position="135"/>
    </location>
</feature>
<feature type="domain" description="EF-hand 3" evidence="3">
    <location>
        <begin position="145"/>
        <end position="180"/>
    </location>
</feature>
<feature type="binding site" evidence="3">
    <location>
        <position position="77"/>
    </location>
    <ligand>
        <name>Ca(2+)</name>
        <dbReference type="ChEBI" id="CHEBI:29108"/>
        <label>1</label>
    </ligand>
</feature>
<feature type="binding site" evidence="3">
    <location>
        <position position="79"/>
    </location>
    <ligand>
        <name>Ca(2+)</name>
        <dbReference type="ChEBI" id="CHEBI:29108"/>
        <label>1</label>
    </ligand>
</feature>
<feature type="binding site" evidence="3">
    <location>
        <position position="81"/>
    </location>
    <ligand>
        <name>Ca(2+)</name>
        <dbReference type="ChEBI" id="CHEBI:29108"/>
        <label>1</label>
    </ligand>
</feature>
<feature type="binding site" evidence="3">
    <location>
        <position position="83"/>
    </location>
    <ligand>
        <name>Ca(2+)</name>
        <dbReference type="ChEBI" id="CHEBI:29108"/>
        <label>1</label>
    </ligand>
</feature>
<feature type="binding site" evidence="3">
    <location>
        <position position="88"/>
    </location>
    <ligand>
        <name>Ca(2+)</name>
        <dbReference type="ChEBI" id="CHEBI:29108"/>
        <label>1</label>
    </ligand>
</feature>
<feature type="binding site" evidence="3">
    <location>
        <position position="113"/>
    </location>
    <ligand>
        <name>Ca(2+)</name>
        <dbReference type="ChEBI" id="CHEBI:29108"/>
        <label>2</label>
    </ligand>
</feature>
<feature type="binding site" evidence="3">
    <location>
        <position position="115"/>
    </location>
    <ligand>
        <name>Ca(2+)</name>
        <dbReference type="ChEBI" id="CHEBI:29108"/>
        <label>2</label>
    </ligand>
</feature>
<feature type="binding site" evidence="3">
    <location>
        <position position="117"/>
    </location>
    <ligand>
        <name>Ca(2+)</name>
        <dbReference type="ChEBI" id="CHEBI:29108"/>
        <label>2</label>
    </ligand>
</feature>
<feature type="binding site" evidence="3">
    <location>
        <position position="124"/>
    </location>
    <ligand>
        <name>Ca(2+)</name>
        <dbReference type="ChEBI" id="CHEBI:29108"/>
        <label>2</label>
    </ligand>
</feature>
<feature type="binding site" evidence="3">
    <location>
        <position position="158"/>
    </location>
    <ligand>
        <name>Ca(2+)</name>
        <dbReference type="ChEBI" id="CHEBI:29108"/>
        <label>3</label>
    </ligand>
</feature>
<feature type="binding site" evidence="3">
    <location>
        <position position="160"/>
    </location>
    <ligand>
        <name>Ca(2+)</name>
        <dbReference type="ChEBI" id="CHEBI:29108"/>
        <label>3</label>
    </ligand>
</feature>
<feature type="binding site" evidence="3">
    <location>
        <position position="162"/>
    </location>
    <ligand>
        <name>Ca(2+)</name>
        <dbReference type="ChEBI" id="CHEBI:29108"/>
        <label>3</label>
    </ligand>
</feature>
<feature type="binding site" evidence="3">
    <location>
        <position position="164"/>
    </location>
    <ligand>
        <name>Ca(2+)</name>
        <dbReference type="ChEBI" id="CHEBI:29108"/>
        <label>3</label>
    </ligand>
</feature>
<feature type="binding site" evidence="3">
    <location>
        <position position="169"/>
    </location>
    <ligand>
        <name>Ca(2+)</name>
        <dbReference type="ChEBI" id="CHEBI:29108"/>
        <label>3</label>
    </ligand>
</feature>
<feature type="splice variant" id="VSP_041330" description="In isoform 2." evidence="6">
    <original>F</original>
    <variation>L</variation>
    <location>
        <position position="20"/>
    </location>
</feature>
<feature type="splice variant" id="VSP_041331" description="In isoform 2." evidence="6">
    <location>
        <begin position="21"/>
        <end position="72"/>
    </location>
</feature>
<feature type="sequence variant" id="VAR_089182" description="In CILD53; likely pathogenic; not detected in homozygous patient-derived respiratory epithelial cells." evidence="5">
    <location>
        <begin position="98"/>
        <end position="211"/>
    </location>
</feature>
<feature type="sequence variant" id="VAR_089183" description="In CILD53; likely pathogenic; not detected in homozygous patient-derived respiratory epithelial cells." evidence="5">
    <location>
        <begin position="123"/>
        <end position="211"/>
    </location>
</feature>
<feature type="sequence conflict" description="In Ref. 2; BAG61576." evidence="8" ref="2">
    <original>L</original>
    <variation>S</variation>
    <location>
        <position position="13"/>
    </location>
</feature>
<protein>
    <recommendedName>
        <fullName evidence="2">Calaxin</fullName>
    </recommendedName>
    <alternativeName>
        <fullName>EF-hand calcium-binding domain-containing protein 1</fullName>
    </alternativeName>
</protein>
<reference key="1">
    <citation type="journal article" date="2004" name="Nat. Genet.">
        <title>Complete sequencing and characterization of 21,243 full-length human cDNAs.</title>
        <authorList>
            <person name="Ota T."/>
            <person name="Suzuki Y."/>
            <person name="Nishikawa T."/>
            <person name="Otsuki T."/>
            <person name="Sugiyama T."/>
            <person name="Irie R."/>
            <person name="Wakamatsu A."/>
            <person name="Hayashi K."/>
            <person name="Sato H."/>
            <person name="Nagai K."/>
            <person name="Kimura K."/>
            <person name="Makita H."/>
            <person name="Sekine M."/>
            <person name="Obayashi M."/>
            <person name="Nishi T."/>
            <person name="Shibahara T."/>
            <person name="Tanaka T."/>
            <person name="Ishii S."/>
            <person name="Yamamoto J."/>
            <person name="Saito K."/>
            <person name="Kawai Y."/>
            <person name="Isono Y."/>
            <person name="Nakamura Y."/>
            <person name="Nagahari K."/>
            <person name="Murakami K."/>
            <person name="Yasuda T."/>
            <person name="Iwayanagi T."/>
            <person name="Wagatsuma M."/>
            <person name="Shiratori A."/>
            <person name="Sudo H."/>
            <person name="Hosoiri T."/>
            <person name="Kaku Y."/>
            <person name="Kodaira H."/>
            <person name="Kondo H."/>
            <person name="Sugawara M."/>
            <person name="Takahashi M."/>
            <person name="Kanda K."/>
            <person name="Yokoi T."/>
            <person name="Furuya T."/>
            <person name="Kikkawa E."/>
            <person name="Omura Y."/>
            <person name="Abe K."/>
            <person name="Kamihara K."/>
            <person name="Katsuta N."/>
            <person name="Sato K."/>
            <person name="Tanikawa M."/>
            <person name="Yamazaki M."/>
            <person name="Ninomiya K."/>
            <person name="Ishibashi T."/>
            <person name="Yamashita H."/>
            <person name="Murakawa K."/>
            <person name="Fujimori K."/>
            <person name="Tanai H."/>
            <person name="Kimata M."/>
            <person name="Watanabe M."/>
            <person name="Hiraoka S."/>
            <person name="Chiba Y."/>
            <person name="Ishida S."/>
            <person name="Ono Y."/>
            <person name="Takiguchi S."/>
            <person name="Watanabe S."/>
            <person name="Yosida M."/>
            <person name="Hotuta T."/>
            <person name="Kusano J."/>
            <person name="Kanehori K."/>
            <person name="Takahashi-Fujii A."/>
            <person name="Hara H."/>
            <person name="Tanase T.-O."/>
            <person name="Nomura Y."/>
            <person name="Togiya S."/>
            <person name="Komai F."/>
            <person name="Hara R."/>
            <person name="Takeuchi K."/>
            <person name="Arita M."/>
            <person name="Imose N."/>
            <person name="Musashino K."/>
            <person name="Yuuki H."/>
            <person name="Oshima A."/>
            <person name="Sasaki N."/>
            <person name="Aotsuka S."/>
            <person name="Yoshikawa Y."/>
            <person name="Matsunawa H."/>
            <person name="Ichihara T."/>
            <person name="Shiohata N."/>
            <person name="Sano S."/>
            <person name="Moriya S."/>
            <person name="Momiyama H."/>
            <person name="Satoh N."/>
            <person name="Takami S."/>
            <person name="Terashima Y."/>
            <person name="Suzuki O."/>
            <person name="Nakagawa S."/>
            <person name="Senoh A."/>
            <person name="Mizoguchi H."/>
            <person name="Goto Y."/>
            <person name="Shimizu F."/>
            <person name="Wakebe H."/>
            <person name="Hishigaki H."/>
            <person name="Watanabe T."/>
            <person name="Sugiyama A."/>
            <person name="Takemoto M."/>
            <person name="Kawakami B."/>
            <person name="Yamazaki M."/>
            <person name="Watanabe K."/>
            <person name="Kumagai A."/>
            <person name="Itakura S."/>
            <person name="Fukuzumi Y."/>
            <person name="Fujimori Y."/>
            <person name="Komiyama M."/>
            <person name="Tashiro H."/>
            <person name="Tanigami A."/>
            <person name="Fujiwara T."/>
            <person name="Ono T."/>
            <person name="Yamada K."/>
            <person name="Fujii Y."/>
            <person name="Ozaki K."/>
            <person name="Hirao M."/>
            <person name="Ohmori Y."/>
            <person name="Kawabata A."/>
            <person name="Hikiji T."/>
            <person name="Kobatake N."/>
            <person name="Inagaki H."/>
            <person name="Ikema Y."/>
            <person name="Okamoto S."/>
            <person name="Okitani R."/>
            <person name="Kawakami T."/>
            <person name="Noguchi S."/>
            <person name="Itoh T."/>
            <person name="Shigeta K."/>
            <person name="Senba T."/>
            <person name="Matsumura K."/>
            <person name="Nakajima Y."/>
            <person name="Mizuno T."/>
            <person name="Morinaga M."/>
            <person name="Sasaki M."/>
            <person name="Togashi T."/>
            <person name="Oyama M."/>
            <person name="Hata H."/>
            <person name="Watanabe M."/>
            <person name="Komatsu T."/>
            <person name="Mizushima-Sugano J."/>
            <person name="Satoh T."/>
            <person name="Shirai Y."/>
            <person name="Takahashi Y."/>
            <person name="Nakagawa K."/>
            <person name="Okumura K."/>
            <person name="Nagase T."/>
            <person name="Nomura N."/>
            <person name="Kikuchi H."/>
            <person name="Masuho Y."/>
            <person name="Yamashita R."/>
            <person name="Nakai K."/>
            <person name="Yada T."/>
            <person name="Nakamura Y."/>
            <person name="Ohara O."/>
            <person name="Isogai T."/>
            <person name="Sugano S."/>
        </authorList>
    </citation>
    <scope>NUCLEOTIDE SEQUENCE [LARGE SCALE MRNA] (ISOFORMS 1 AND 2)</scope>
    <source>
        <tissue>Brain</tissue>
        <tissue>Embryo</tissue>
    </source>
</reference>
<reference key="2">
    <citation type="journal article" date="2006" name="Nature">
        <title>DNA sequence and analysis of human chromosome 8.</title>
        <authorList>
            <person name="Nusbaum C."/>
            <person name="Mikkelsen T.S."/>
            <person name="Zody M.C."/>
            <person name="Asakawa S."/>
            <person name="Taudien S."/>
            <person name="Garber M."/>
            <person name="Kodira C.D."/>
            <person name="Schueler M.G."/>
            <person name="Shimizu A."/>
            <person name="Whittaker C.A."/>
            <person name="Chang J.L."/>
            <person name="Cuomo C.A."/>
            <person name="Dewar K."/>
            <person name="FitzGerald M.G."/>
            <person name="Yang X."/>
            <person name="Allen N.R."/>
            <person name="Anderson S."/>
            <person name="Asakawa T."/>
            <person name="Blechschmidt K."/>
            <person name="Bloom T."/>
            <person name="Borowsky M.L."/>
            <person name="Butler J."/>
            <person name="Cook A."/>
            <person name="Corum B."/>
            <person name="DeArellano K."/>
            <person name="DeCaprio D."/>
            <person name="Dooley K.T."/>
            <person name="Dorris L. III"/>
            <person name="Engels R."/>
            <person name="Gloeckner G."/>
            <person name="Hafez N."/>
            <person name="Hagopian D.S."/>
            <person name="Hall J.L."/>
            <person name="Ishikawa S.K."/>
            <person name="Jaffe D.B."/>
            <person name="Kamat A."/>
            <person name="Kudoh J."/>
            <person name="Lehmann R."/>
            <person name="Lokitsang T."/>
            <person name="Macdonald P."/>
            <person name="Major J.E."/>
            <person name="Matthews C.D."/>
            <person name="Mauceli E."/>
            <person name="Menzel U."/>
            <person name="Mihalev A.H."/>
            <person name="Minoshima S."/>
            <person name="Murayama Y."/>
            <person name="Naylor J.W."/>
            <person name="Nicol R."/>
            <person name="Nguyen C."/>
            <person name="O'Leary S.B."/>
            <person name="O'Neill K."/>
            <person name="Parker S.C.J."/>
            <person name="Polley A."/>
            <person name="Raymond C.K."/>
            <person name="Reichwald K."/>
            <person name="Rodriguez J."/>
            <person name="Sasaki T."/>
            <person name="Schilhabel M."/>
            <person name="Siddiqui R."/>
            <person name="Smith C.L."/>
            <person name="Sneddon T.P."/>
            <person name="Talamas J.A."/>
            <person name="Tenzin P."/>
            <person name="Topham K."/>
            <person name="Venkataraman V."/>
            <person name="Wen G."/>
            <person name="Yamazaki S."/>
            <person name="Young S.K."/>
            <person name="Zeng Q."/>
            <person name="Zimmer A.R."/>
            <person name="Rosenthal A."/>
            <person name="Birren B.W."/>
            <person name="Platzer M."/>
            <person name="Shimizu N."/>
            <person name="Lander E.S."/>
        </authorList>
    </citation>
    <scope>NUCLEOTIDE SEQUENCE [LARGE SCALE GENOMIC DNA]</scope>
</reference>
<reference key="3">
    <citation type="journal article" date="2004" name="Genome Res.">
        <title>The status, quality, and expansion of the NIH full-length cDNA project: the Mammalian Gene Collection (MGC).</title>
        <authorList>
            <consortium name="The MGC Project Team"/>
        </authorList>
    </citation>
    <scope>NUCLEOTIDE SEQUENCE [LARGE SCALE MRNA] (ISOFORM 1)</scope>
    <source>
        <tissue>Lung</tissue>
    </source>
</reference>
<reference key="4">
    <citation type="journal article" date="2019" name="J. Proteome Res.">
        <title>Cell Type-Specific Expression of Testis Elevated Genes Based on Transcriptomics and Antibody-Based Proteomics.</title>
        <authorList>
            <person name="Pineau C."/>
            <person name="Hikmet F."/>
            <person name="Zhang C."/>
            <person name="Oksvold P."/>
            <person name="Chen S."/>
            <person name="Fagerberg L."/>
            <person name="Uhlen M."/>
            <person name="Lindskog C."/>
        </authorList>
    </citation>
    <scope>SUBCELLULAR LOCATION</scope>
</reference>
<reference key="5">
    <citation type="journal article" date="2023" name="Genet. Med.">
        <title>Pathogenic variants in CLXN encoding the outer dynein arm docking-associated calcium-binding protein calaxin cause primary ciliary dyskinesia.</title>
        <authorList>
            <person name="Hjeij R."/>
            <person name="Aprea I."/>
            <person name="Poeta M."/>
            <person name="Noethe-Menchen T."/>
            <person name="Bracht D."/>
            <person name="Raidt J."/>
            <person name="Honecker B.I."/>
            <person name="Dougherty G.W."/>
            <person name="Olbrich H."/>
            <person name="Schwartz O."/>
            <person name="Keller U."/>
            <person name="Nuesse H."/>
            <person name="Diderich K.E.M."/>
            <person name="Vogelberg C."/>
            <person name="Santamaria F."/>
            <person name="Omran H."/>
        </authorList>
    </citation>
    <scope>VARIANTS CILD53 98-ARG--MET-211 DEL AND 123-GLU--MET-211 DEL</scope>
    <scope>CHARACTERIZATION OF VARIANTS CILD53 98-ARG--MET-211 DEL AND 123-GLU--MET-211 DEL</scope>
    <scope>INVOLVEMENT IN CILD53</scope>
    <scope>TISSUE SPECIFICITY</scope>
    <scope>SUBCELLULAR LOCATION</scope>
</reference>
<dbReference type="EMBL" id="AK021829">
    <property type="protein sequence ID" value="BAB13906.1"/>
    <property type="molecule type" value="mRNA"/>
</dbReference>
<dbReference type="EMBL" id="AK299659">
    <property type="protein sequence ID" value="BAG61576.1"/>
    <property type="molecule type" value="mRNA"/>
</dbReference>
<dbReference type="EMBL" id="AC022915">
    <property type="status" value="NOT_ANNOTATED_CDS"/>
    <property type="molecule type" value="Genomic_DNA"/>
</dbReference>
<dbReference type="EMBL" id="BC025676">
    <property type="protein sequence ID" value="AAH25676.1"/>
    <property type="molecule type" value="mRNA"/>
</dbReference>
<dbReference type="CCDS" id="CCDS47853.1">
    <molecule id="Q9HAE3-2"/>
</dbReference>
<dbReference type="CCDS" id="CCDS6145.1">
    <molecule id="Q9HAE3-1"/>
</dbReference>
<dbReference type="RefSeq" id="NP_001136329.1">
    <molecule id="Q9HAE3-2"/>
    <property type="nucleotide sequence ID" value="NM_001142857.2"/>
</dbReference>
<dbReference type="RefSeq" id="NP_001350902.1">
    <molecule id="Q9HAE3-2"/>
    <property type="nucleotide sequence ID" value="NM_001363973.3"/>
</dbReference>
<dbReference type="RefSeq" id="NP_001350903.1">
    <molecule id="Q9HAE3-2"/>
    <property type="nucleotide sequence ID" value="NM_001363974.2"/>
</dbReference>
<dbReference type="RefSeq" id="NP_078869.1">
    <molecule id="Q9HAE3-1"/>
    <property type="nucleotide sequence ID" value="NM_024593.4"/>
</dbReference>
<dbReference type="RefSeq" id="XP_005251360.1">
    <molecule id="Q9HAE3-1"/>
    <property type="nucleotide sequence ID" value="XM_005251303.2"/>
</dbReference>
<dbReference type="RefSeq" id="XP_011515891.1">
    <molecule id="Q9HAE3-1"/>
    <property type="nucleotide sequence ID" value="XM_011517589.2"/>
</dbReference>
<dbReference type="RefSeq" id="XP_016869315.1">
    <property type="nucleotide sequence ID" value="XM_017013826.1"/>
</dbReference>
<dbReference type="RefSeq" id="XP_054217193.1">
    <molecule id="Q9HAE3-1"/>
    <property type="nucleotide sequence ID" value="XM_054361218.1"/>
</dbReference>
<dbReference type="RefSeq" id="XP_054217194.1">
    <molecule id="Q9HAE3-1"/>
    <property type="nucleotide sequence ID" value="XM_054361219.1"/>
</dbReference>
<dbReference type="PDB" id="8J07">
    <property type="method" value="EM"/>
    <property type="resolution" value="4.10 A"/>
    <property type="chains" value="m0/q0/s0/u0=1-211"/>
</dbReference>
<dbReference type="PDBsum" id="8J07"/>
<dbReference type="EMDB" id="EMD-35888"/>
<dbReference type="SMR" id="Q9HAE3"/>
<dbReference type="BioGRID" id="122773">
    <property type="interactions" value="8"/>
</dbReference>
<dbReference type="ComplexPortal" id="CPX-2626">
    <property type="entry name" value="Outer dynein arm-docking complex"/>
</dbReference>
<dbReference type="FunCoup" id="Q9HAE3">
    <property type="interactions" value="70"/>
</dbReference>
<dbReference type="IntAct" id="Q9HAE3">
    <property type="interactions" value="7"/>
</dbReference>
<dbReference type="STRING" id="9606.ENSP00000262103"/>
<dbReference type="iPTMnet" id="Q9HAE3"/>
<dbReference type="PhosphoSitePlus" id="Q9HAE3"/>
<dbReference type="BioMuta" id="EFCAB1"/>
<dbReference type="DMDM" id="74761592"/>
<dbReference type="MassIVE" id="Q9HAE3"/>
<dbReference type="PaxDb" id="9606-ENSP00000262103"/>
<dbReference type="PeptideAtlas" id="Q9HAE3"/>
<dbReference type="ProteomicsDB" id="81398">
    <molecule id="Q9HAE3-1"/>
</dbReference>
<dbReference type="ProteomicsDB" id="81399">
    <molecule id="Q9HAE3-2"/>
</dbReference>
<dbReference type="Antibodypedia" id="11583">
    <property type="antibodies" value="61 antibodies from 17 providers"/>
</dbReference>
<dbReference type="DNASU" id="79645"/>
<dbReference type="Ensembl" id="ENST00000262103.8">
    <molecule id="Q9HAE3-1"/>
    <property type="protein sequence ID" value="ENSP00000262103.3"/>
    <property type="gene ID" value="ENSG00000034239.11"/>
</dbReference>
<dbReference type="Ensembl" id="ENST00000433756.1">
    <molecule id="Q9HAE3-2"/>
    <property type="protein sequence ID" value="ENSP00000400873.1"/>
    <property type="gene ID" value="ENSG00000034239.11"/>
</dbReference>
<dbReference type="Ensembl" id="ENST00000523092.5">
    <molecule id="Q9HAE3-2"/>
    <property type="protein sequence ID" value="ENSP00000430765.1"/>
    <property type="gene ID" value="ENSG00000034239.11"/>
</dbReference>
<dbReference type="GeneID" id="79645"/>
<dbReference type="KEGG" id="hsa:79645"/>
<dbReference type="MANE-Select" id="ENST00000262103.8">
    <property type="protein sequence ID" value="ENSP00000262103.3"/>
    <property type="RefSeq nucleotide sequence ID" value="NM_024593.4"/>
    <property type="RefSeq protein sequence ID" value="NP_078869.1"/>
</dbReference>
<dbReference type="UCSC" id="uc003xqo.3">
    <molecule id="Q9HAE3-1"/>
    <property type="organism name" value="human"/>
</dbReference>
<dbReference type="AGR" id="HGNC:25678"/>
<dbReference type="CTD" id="79645"/>
<dbReference type="DisGeNET" id="79645"/>
<dbReference type="GeneCards" id="CLXN"/>
<dbReference type="HGNC" id="HGNC:25678">
    <property type="gene designation" value="CLXN"/>
</dbReference>
<dbReference type="HPA" id="ENSG00000034239">
    <property type="expression patterns" value="Group enriched (choroid plexus, fallopian tube, testis)"/>
</dbReference>
<dbReference type="MalaCards" id="CLXN"/>
<dbReference type="MIM" id="619564">
    <property type="type" value="gene"/>
</dbReference>
<dbReference type="MIM" id="620642">
    <property type="type" value="phenotype"/>
</dbReference>
<dbReference type="neXtProt" id="NX_Q9HAE3"/>
<dbReference type="OpenTargets" id="ENSG00000034239"/>
<dbReference type="VEuPathDB" id="HostDB:ENSG00000034239"/>
<dbReference type="eggNOG" id="KOG0044">
    <property type="taxonomic scope" value="Eukaryota"/>
</dbReference>
<dbReference type="GeneTree" id="ENSGT00940000159968"/>
<dbReference type="InParanoid" id="Q9HAE3"/>
<dbReference type="OMA" id="DNDGCVS"/>
<dbReference type="OrthoDB" id="191686at2759"/>
<dbReference type="PAN-GO" id="Q9HAE3">
    <property type="GO annotations" value="1 GO annotation based on evolutionary models"/>
</dbReference>
<dbReference type="PhylomeDB" id="Q9HAE3"/>
<dbReference type="TreeFam" id="TF323358"/>
<dbReference type="PathwayCommons" id="Q9HAE3"/>
<dbReference type="BioGRID-ORCS" id="79645">
    <property type="hits" value="17 hits in 1133 CRISPR screens"/>
</dbReference>
<dbReference type="GenomeRNAi" id="79645"/>
<dbReference type="Pharos" id="Q9HAE3">
    <property type="development level" value="Tdark"/>
</dbReference>
<dbReference type="PRO" id="PR:Q9HAE3"/>
<dbReference type="Proteomes" id="UP000005640">
    <property type="component" value="Chromosome 8"/>
</dbReference>
<dbReference type="RNAct" id="Q9HAE3">
    <property type="molecule type" value="protein"/>
</dbReference>
<dbReference type="Bgee" id="ENSG00000034239">
    <property type="expression patterns" value="Expressed in right uterine tube and 110 other cell types or tissues"/>
</dbReference>
<dbReference type="ExpressionAtlas" id="Q9HAE3">
    <property type="expression patterns" value="baseline and differential"/>
</dbReference>
<dbReference type="GO" id="GO:0005929">
    <property type="term" value="C:cilium"/>
    <property type="evidence" value="ECO:0000314"/>
    <property type="project" value="UniProtKB"/>
</dbReference>
<dbReference type="GO" id="GO:0005737">
    <property type="term" value="C:cytoplasm"/>
    <property type="evidence" value="ECO:0007669"/>
    <property type="project" value="UniProtKB-KW"/>
</dbReference>
<dbReference type="GO" id="GO:0005856">
    <property type="term" value="C:cytoskeleton"/>
    <property type="evidence" value="ECO:0007669"/>
    <property type="project" value="UniProtKB-KW"/>
</dbReference>
<dbReference type="GO" id="GO:0036126">
    <property type="term" value="C:sperm flagellum"/>
    <property type="evidence" value="ECO:0000314"/>
    <property type="project" value="UniProtKB"/>
</dbReference>
<dbReference type="GO" id="GO:0005509">
    <property type="term" value="F:calcium ion binding"/>
    <property type="evidence" value="ECO:0000318"/>
    <property type="project" value="GO_Central"/>
</dbReference>
<dbReference type="GO" id="GO:0003341">
    <property type="term" value="P:cilium movement"/>
    <property type="evidence" value="ECO:0000250"/>
    <property type="project" value="UniProtKB"/>
</dbReference>
<dbReference type="GO" id="GO:0036158">
    <property type="term" value="P:outer dynein arm assembly"/>
    <property type="evidence" value="ECO:0000250"/>
    <property type="project" value="UniProtKB"/>
</dbReference>
<dbReference type="GO" id="GO:0003352">
    <property type="term" value="P:regulation of cilium movement"/>
    <property type="evidence" value="ECO:0000250"/>
    <property type="project" value="UniProtKB"/>
</dbReference>
<dbReference type="GO" id="GO:1901317">
    <property type="term" value="P:regulation of flagellated sperm motility"/>
    <property type="evidence" value="ECO:0000250"/>
    <property type="project" value="UniProtKB"/>
</dbReference>
<dbReference type="GO" id="GO:0009966">
    <property type="term" value="P:regulation of signal transduction"/>
    <property type="evidence" value="ECO:0000318"/>
    <property type="project" value="GO_Central"/>
</dbReference>
<dbReference type="CDD" id="cd00051">
    <property type="entry name" value="EFh"/>
    <property type="match status" value="2"/>
</dbReference>
<dbReference type="Gene3D" id="1.10.238.10">
    <property type="entry name" value="EF-hand"/>
    <property type="match status" value="1"/>
</dbReference>
<dbReference type="InterPro" id="IPR011992">
    <property type="entry name" value="EF-hand-dom_pair"/>
</dbReference>
<dbReference type="InterPro" id="IPR018247">
    <property type="entry name" value="EF_Hand_1_Ca_BS"/>
</dbReference>
<dbReference type="InterPro" id="IPR002048">
    <property type="entry name" value="EF_hand_dom"/>
</dbReference>
<dbReference type="InterPro" id="IPR028846">
    <property type="entry name" value="Recoverin"/>
</dbReference>
<dbReference type="PANTHER" id="PTHR23055:SF75">
    <property type="entry name" value="CALAXIN"/>
    <property type="match status" value="1"/>
</dbReference>
<dbReference type="PANTHER" id="PTHR23055">
    <property type="entry name" value="CALCIUM BINDING PROTEINS"/>
    <property type="match status" value="1"/>
</dbReference>
<dbReference type="Pfam" id="PF13499">
    <property type="entry name" value="EF-hand_7"/>
    <property type="match status" value="1"/>
</dbReference>
<dbReference type="PRINTS" id="PR00450">
    <property type="entry name" value="RECOVERIN"/>
</dbReference>
<dbReference type="SMART" id="SM00054">
    <property type="entry name" value="EFh"/>
    <property type="match status" value="3"/>
</dbReference>
<dbReference type="SUPFAM" id="SSF47473">
    <property type="entry name" value="EF-hand"/>
    <property type="match status" value="1"/>
</dbReference>
<dbReference type="PROSITE" id="PS00018">
    <property type="entry name" value="EF_HAND_1"/>
    <property type="match status" value="3"/>
</dbReference>
<dbReference type="PROSITE" id="PS50222">
    <property type="entry name" value="EF_HAND_2"/>
    <property type="match status" value="3"/>
</dbReference>
<comment type="function">
    <text evidence="1 2">Component of the outer dynein arm-docking complex (ODA-DC) that mediates outer dynein arms (ODA) binding onto the doublet microtubule. Seems to regulate the assembly of both ODAs and their axonemal docking complex onto ciliary microtubules (By similarity). Regulates ciliary and flagellar motility and is required for cilia-driven determination of body laterality (By similarity).</text>
</comment>
<comment type="subunit">
    <text evidence="1">Component of the outer dynein arm-docking complex along with ODAD1, ODAD2, ODAD3 and ODAD4.</text>
</comment>
<comment type="subcellular location">
    <subcellularLocation>
        <location evidence="5">Cytoplasm</location>
        <location evidence="5">Cytoskeleton</location>
        <location evidence="5">Cilium axoneme</location>
    </subcellularLocation>
    <subcellularLocation>
        <location evidence="4">Cell projection</location>
        <location evidence="4">Cilium</location>
    </subcellularLocation>
    <subcellularLocation>
        <location evidence="4">Cell projection</location>
        <location evidence="4">Cilium</location>
        <location evidence="4">Flagellum</location>
    </subcellularLocation>
</comment>
<comment type="alternative products">
    <event type="alternative splicing"/>
    <isoform>
        <id>Q9HAE3-1</id>
        <name>1</name>
        <sequence type="displayed"/>
    </isoform>
    <isoform>
        <id>Q9HAE3-2</id>
        <name>2</name>
        <sequence type="described" ref="VSP_041330 VSP_041331"/>
    </isoform>
</comment>
<comment type="tissue specificity">
    <text evidence="5">Strong expression in the respiratory epithelium (PubMed:36727596). Expressed in the sperm (PubMed:36727596).</text>
</comment>
<comment type="disease" evidence="5">
    <disease id="DI-06809">
        <name>Ciliary dyskinesia, primary, 53</name>
        <acronym>CILD53</acronym>
        <description>A form of primary ciliary dyskinesia, a disorder characterized by abnormalities of motile cilia. Respiratory infections leading to chronic inflammation and bronchiectasis are recurrent, due to defects in the respiratory cilia. Some patients exhibit randomization of left-right body asymmetry and situs inversus. Primary ciliary dyskinesia associated with situs inversus is referred to as Kartagener syndrome. CILD53 is an autosomal recessive form characterized by randomization of the left-right body asymmetry and respiratory symptoms.</description>
        <dbReference type="MIM" id="620642"/>
    </disease>
    <text>The disease is caused by variants affecting the gene represented in this entry.</text>
</comment>
<keyword id="KW-0002">3D-structure</keyword>
<keyword id="KW-0025">Alternative splicing</keyword>
<keyword id="KW-0106">Calcium</keyword>
<keyword id="KW-0966">Cell projection</keyword>
<keyword id="KW-1186">Ciliopathy</keyword>
<keyword id="KW-0969">Cilium</keyword>
<keyword id="KW-0963">Cytoplasm</keyword>
<keyword id="KW-0206">Cytoskeleton</keyword>
<keyword id="KW-0225">Disease variant</keyword>
<keyword id="KW-0282">Flagellum</keyword>
<keyword id="KW-1012">Kartagener syndrome</keyword>
<keyword id="KW-0479">Metal-binding</keyword>
<keyword id="KW-0990">Primary ciliary dyskinesia</keyword>
<keyword id="KW-1267">Proteomics identification</keyword>
<keyword id="KW-1185">Reference proteome</keyword>
<keyword id="KW-0677">Repeat</keyword>
<gene>
    <name evidence="9" type="primary">CLXN</name>
    <name type="synonym">EFCAB1</name>
    <name evidence="7 9" type="synonym">ODAD5</name>
</gene>
<sequence>MNRKKLQKLTDTLTKNCKHFNKFEVNCLIKLFYDLVGGVERQGLVVGLDRNAFRNILHVTFGMTDDMIMDRVFRGFDKDNDGCVNVLEWIHGLSLFLRGSLEEKMKYCFEVFDLNGDGFISKEEMFHMLKNSLLKQPSEEDPDEGIKDLVEITLKKMDHDHDGKLSFADYELAVREETLLLEAFGPCLPDPKSQMEFEAQVFKDPNEFNDM</sequence>
<proteinExistence type="evidence at protein level"/>